<reference key="1">
    <citation type="journal article" date="1993" name="Nucleic Acids Res.">
        <title>Analysis of the Escherichia coli genome. IV. DNA sequence of the region from 89.2 to 92.8 minutes.</title>
        <authorList>
            <person name="Blattner F.R."/>
            <person name="Burland V.D."/>
            <person name="Plunkett G. III"/>
            <person name="Sofia H.J."/>
            <person name="Daniels D.L."/>
        </authorList>
    </citation>
    <scope>NUCLEOTIDE SEQUENCE [LARGE SCALE GENOMIC DNA]</scope>
    <source>
        <strain>K12 / MG1655 / ATCC 47076</strain>
    </source>
</reference>
<reference key="2">
    <citation type="journal article" date="1997" name="Science">
        <title>The complete genome sequence of Escherichia coli K-12.</title>
        <authorList>
            <person name="Blattner F.R."/>
            <person name="Plunkett G. III"/>
            <person name="Bloch C.A."/>
            <person name="Perna N.T."/>
            <person name="Burland V."/>
            <person name="Riley M."/>
            <person name="Collado-Vides J."/>
            <person name="Glasner J.D."/>
            <person name="Rode C.K."/>
            <person name="Mayhew G.F."/>
            <person name="Gregor J."/>
            <person name="Davis N.W."/>
            <person name="Kirkpatrick H.A."/>
            <person name="Goeden M.A."/>
            <person name="Rose D.J."/>
            <person name="Mau B."/>
            <person name="Shao Y."/>
        </authorList>
    </citation>
    <scope>NUCLEOTIDE SEQUENCE [LARGE SCALE GENOMIC DNA]</scope>
    <source>
        <strain>K12 / MG1655 / ATCC 47076</strain>
    </source>
</reference>
<reference key="3">
    <citation type="journal article" date="2006" name="Mol. Syst. Biol.">
        <title>Highly accurate genome sequences of Escherichia coli K-12 strains MG1655 and W3110.</title>
        <authorList>
            <person name="Hayashi K."/>
            <person name="Morooka N."/>
            <person name="Yamamoto Y."/>
            <person name="Fujita K."/>
            <person name="Isono K."/>
            <person name="Choi S."/>
            <person name="Ohtsubo E."/>
            <person name="Baba T."/>
            <person name="Wanner B.L."/>
            <person name="Mori H."/>
            <person name="Horiuchi T."/>
        </authorList>
    </citation>
    <scope>NUCLEOTIDE SEQUENCE [LARGE SCALE GENOMIC DNA]</scope>
    <source>
        <strain>K12 / W3110 / ATCC 27325 / DSM 5911</strain>
    </source>
</reference>
<reference key="4">
    <citation type="journal article" date="2013" name="Mol. Cell. Proteomics">
        <title>Deep coverage of the Escherichia coli proteome enables the assessment of false discovery rates in simple proteogenomic experiments.</title>
        <authorList>
            <person name="Krug K."/>
            <person name="Carpy A."/>
            <person name="Behrends G."/>
            <person name="Matic K."/>
            <person name="Soares N.C."/>
            <person name="Macek B."/>
        </authorList>
    </citation>
    <scope>PROTEIN SEQUENCE OF 10-19</scope>
    <source>
        <strain>K12 / BW25113</strain>
    </source>
</reference>
<reference key="5">
    <citation type="journal article" date="2002" name="J. Biol. Chem.">
        <title>Identification of the tRNA-dihydrouridine synthase family.</title>
        <authorList>
            <person name="Bishop A.C."/>
            <person name="Xu J."/>
            <person name="Johnson R.C."/>
            <person name="Schimmel P."/>
            <person name="de Crecy-Lagard V."/>
        </authorList>
    </citation>
    <scope>FUNCTION</scope>
    <scope>DISRUPTION PHENOTYPE</scope>
    <source>
        <strain>K12</strain>
    </source>
</reference>
<reference key="6">
    <citation type="journal article" date="2011" name="Proc. Natl. Acad. Sci. U.S.A.">
        <title>Molecular basis of dihydrouridine formation on tRNA.</title>
        <authorList>
            <person name="Yu F."/>
            <person name="Tanaka Y."/>
            <person name="Yamashita K."/>
            <person name="Suzuki T."/>
            <person name="Nakamura A."/>
            <person name="Hirano N."/>
            <person name="Suzuki T."/>
            <person name="Yao M."/>
            <person name="Tanaka I."/>
        </authorList>
    </citation>
    <scope>FUNCTION</scope>
    <scope>DISRUPTION PHENOTYPE</scope>
    <scope>MUTAGENESIS OF CYS-114 AND LYS-153</scope>
    <source>
        <strain>K12 / MG1655 / ATCC 47076</strain>
    </source>
</reference>
<reference key="7">
    <citation type="journal article" date="2015" name="Proc. Natl. Acad. Sci. U.S.A.">
        <title>Major reorientation of tRNA substrates defines specificity of dihydrouridine synthases.</title>
        <authorList>
            <person name="Byrne R.T."/>
            <person name="Jenkins H.T."/>
            <person name="Peters D.T."/>
            <person name="Whelan F."/>
            <person name="Stowell J."/>
            <person name="Aziz N."/>
            <person name="Kasatsky P."/>
            <person name="Rodnina M.V."/>
            <person name="Koonin E.V."/>
            <person name="Konevega A.L."/>
            <person name="Antson A.A."/>
        </authorList>
    </citation>
    <scope>DUSA SUBFAMILY SPECIFICITY</scope>
</reference>
<accession>P32695</accession>
<accession>P76786</accession>
<accession>Q2M6Q5</accession>
<dbReference type="EC" id="1.3.1.-" evidence="1 8"/>
<dbReference type="EC" id="1.3.1.91" evidence="1 7 8"/>
<dbReference type="EMBL" id="U00006">
    <property type="protein sequence ID" value="AAC43143.1"/>
    <property type="molecule type" value="Genomic_DNA"/>
</dbReference>
<dbReference type="EMBL" id="U00096">
    <property type="protein sequence ID" value="AAC77019.3"/>
    <property type="molecule type" value="Genomic_DNA"/>
</dbReference>
<dbReference type="EMBL" id="AP009048">
    <property type="protein sequence ID" value="BAE78051.1"/>
    <property type="molecule type" value="Genomic_DNA"/>
</dbReference>
<dbReference type="RefSeq" id="NP_418473.3">
    <property type="nucleotide sequence ID" value="NC_000913.3"/>
</dbReference>
<dbReference type="RefSeq" id="WP_001298868.1">
    <property type="nucleotide sequence ID" value="NZ_STEB01000022.1"/>
</dbReference>
<dbReference type="SMR" id="P32695"/>
<dbReference type="BioGRID" id="4259608">
    <property type="interactions" value="15"/>
</dbReference>
<dbReference type="FunCoup" id="P32695">
    <property type="interactions" value="340"/>
</dbReference>
<dbReference type="STRING" id="511145.b4049"/>
<dbReference type="jPOST" id="P32695"/>
<dbReference type="PaxDb" id="511145-b4049"/>
<dbReference type="EnsemblBacteria" id="AAC77019">
    <property type="protein sequence ID" value="AAC77019"/>
    <property type="gene ID" value="b4049"/>
</dbReference>
<dbReference type="GeneID" id="93777783"/>
<dbReference type="GeneID" id="948558"/>
<dbReference type="KEGG" id="ecj:JW5950"/>
<dbReference type="KEGG" id="eco:b4049"/>
<dbReference type="PATRIC" id="fig|511145.12.peg.4167"/>
<dbReference type="EchoBASE" id="EB1876"/>
<dbReference type="eggNOG" id="COG0042">
    <property type="taxonomic scope" value="Bacteria"/>
</dbReference>
<dbReference type="HOGENOM" id="CLU_013299_2_1_6"/>
<dbReference type="InParanoid" id="P32695"/>
<dbReference type="OMA" id="NNMIGAC"/>
<dbReference type="OrthoDB" id="9783413at2"/>
<dbReference type="BioCyc" id="EcoCyc:EG11932-MONOMER"/>
<dbReference type="BioCyc" id="MetaCyc:EG11932-MONOMER"/>
<dbReference type="PRO" id="PR:P32695"/>
<dbReference type="Proteomes" id="UP000000625">
    <property type="component" value="Chromosome"/>
</dbReference>
<dbReference type="GO" id="GO:0005829">
    <property type="term" value="C:cytosol"/>
    <property type="evidence" value="ECO:0000314"/>
    <property type="project" value="EcoCyc"/>
</dbReference>
<dbReference type="GO" id="GO:0050660">
    <property type="term" value="F:flavin adenine dinucleotide binding"/>
    <property type="evidence" value="ECO:0007669"/>
    <property type="project" value="InterPro"/>
</dbReference>
<dbReference type="GO" id="GO:0010181">
    <property type="term" value="F:FMN binding"/>
    <property type="evidence" value="ECO:0007669"/>
    <property type="project" value="UniProtKB-UniRule"/>
</dbReference>
<dbReference type="GO" id="GO:0000049">
    <property type="term" value="F:tRNA binding"/>
    <property type="evidence" value="ECO:0007669"/>
    <property type="project" value="UniProtKB-UniRule"/>
</dbReference>
<dbReference type="GO" id="GO:0017150">
    <property type="term" value="F:tRNA dihydrouridine synthase activity"/>
    <property type="evidence" value="ECO:0000315"/>
    <property type="project" value="EcoCyc"/>
</dbReference>
<dbReference type="GO" id="GO:0102264">
    <property type="term" value="F:tRNA-dihydrouridine20 synthase activity"/>
    <property type="evidence" value="ECO:0007669"/>
    <property type="project" value="UniProtKB-EC"/>
</dbReference>
<dbReference type="GO" id="GO:0102266">
    <property type="term" value="F:tRNA-dihydrouridine20a synthase activity"/>
    <property type="evidence" value="ECO:0007669"/>
    <property type="project" value="RHEA"/>
</dbReference>
<dbReference type="CDD" id="cd02801">
    <property type="entry name" value="DUS_like_FMN"/>
    <property type="match status" value="1"/>
</dbReference>
<dbReference type="FunFam" id="1.20.120.1460:FF:000001">
    <property type="entry name" value="tRNA-dihydrouridine(20/20a) synthase"/>
    <property type="match status" value="1"/>
</dbReference>
<dbReference type="FunFam" id="3.20.20.70:FF:000083">
    <property type="entry name" value="tRNA-dihydrouridine(20/20a) synthase"/>
    <property type="match status" value="1"/>
</dbReference>
<dbReference type="Gene3D" id="1.20.120.1460">
    <property type="match status" value="1"/>
</dbReference>
<dbReference type="Gene3D" id="3.20.20.70">
    <property type="entry name" value="Aldolase class I"/>
    <property type="match status" value="1"/>
</dbReference>
<dbReference type="HAMAP" id="MF_02041">
    <property type="entry name" value="DusA_subfam"/>
    <property type="match status" value="1"/>
</dbReference>
<dbReference type="InterPro" id="IPR013785">
    <property type="entry name" value="Aldolase_TIM"/>
</dbReference>
<dbReference type="InterPro" id="IPR035587">
    <property type="entry name" value="DUS-like_FMN-bd"/>
</dbReference>
<dbReference type="InterPro" id="IPR001269">
    <property type="entry name" value="DUS_fam"/>
</dbReference>
<dbReference type="InterPro" id="IPR004653">
    <property type="entry name" value="DusA"/>
</dbReference>
<dbReference type="InterPro" id="IPR018517">
    <property type="entry name" value="tRNA_hU_synthase_CS"/>
</dbReference>
<dbReference type="NCBIfam" id="NF008774">
    <property type="entry name" value="PRK11815.1"/>
    <property type="match status" value="1"/>
</dbReference>
<dbReference type="NCBIfam" id="TIGR00742">
    <property type="entry name" value="yjbN"/>
    <property type="match status" value="1"/>
</dbReference>
<dbReference type="PANTHER" id="PTHR42907">
    <property type="entry name" value="FMN-LINKED OXIDOREDUCTASES SUPERFAMILY PROTEIN"/>
    <property type="match status" value="1"/>
</dbReference>
<dbReference type="PANTHER" id="PTHR42907:SF1">
    <property type="entry name" value="FMN-LINKED OXIDOREDUCTASES SUPERFAMILY PROTEIN"/>
    <property type="match status" value="1"/>
</dbReference>
<dbReference type="Pfam" id="PF01207">
    <property type="entry name" value="Dus"/>
    <property type="match status" value="1"/>
</dbReference>
<dbReference type="PIRSF" id="PIRSF006621">
    <property type="entry name" value="Dus"/>
    <property type="match status" value="1"/>
</dbReference>
<dbReference type="SUPFAM" id="SSF51395">
    <property type="entry name" value="FMN-linked oxidoreductases"/>
    <property type="match status" value="1"/>
</dbReference>
<dbReference type="PROSITE" id="PS01136">
    <property type="entry name" value="UPF0034"/>
    <property type="match status" value="1"/>
</dbReference>
<name>DUSA_ECOLI</name>
<gene>
    <name evidence="1 4" type="primary">dusA</name>
    <name type="synonym">yjbN</name>
    <name type="ordered locus">b4049</name>
    <name type="ordered locus">JW5950</name>
</gene>
<protein>
    <recommendedName>
        <fullName evidence="1 8">tRNA-dihydrouridine(20/20a) synthase</fullName>
        <ecNumber evidence="1 8">1.3.1.-</ecNumber>
        <ecNumber evidence="1 7 8">1.3.1.91</ecNumber>
    </recommendedName>
    <alternativeName>
        <fullName evidence="1 5">U20-specific dihydrouridine synthase</fullName>
        <shortName evidence="1 5">U20-specific Dus</shortName>
    </alternativeName>
    <alternativeName>
        <fullName evidence="1 4">tRNA-dihydrouridine synthase A</fullName>
    </alternativeName>
</protein>
<feature type="chain" id="PRO_0000162063" description="tRNA-dihydrouridine(20/20a) synthase">
    <location>
        <begin position="1"/>
        <end position="345"/>
    </location>
</feature>
<feature type="active site" description="Proton donor" evidence="1">
    <location>
        <position position="114"/>
    </location>
</feature>
<feature type="binding site" evidence="1">
    <location>
        <begin position="32"/>
        <end position="34"/>
    </location>
    <ligand>
        <name>FMN</name>
        <dbReference type="ChEBI" id="CHEBI:58210"/>
    </ligand>
</feature>
<feature type="binding site" evidence="1">
    <location>
        <position position="84"/>
    </location>
    <ligand>
        <name>FMN</name>
        <dbReference type="ChEBI" id="CHEBI:58210"/>
    </ligand>
</feature>
<feature type="binding site" evidence="1">
    <location>
        <position position="153"/>
    </location>
    <ligand>
        <name>FMN</name>
        <dbReference type="ChEBI" id="CHEBI:58210"/>
    </ligand>
</feature>
<feature type="binding site" evidence="1">
    <location>
        <position position="186"/>
    </location>
    <ligand>
        <name>FMN</name>
        <dbReference type="ChEBI" id="CHEBI:58210"/>
    </ligand>
</feature>
<feature type="binding site" evidence="1">
    <location>
        <begin position="226"/>
        <end position="228"/>
    </location>
    <ligand>
        <name>FMN</name>
        <dbReference type="ChEBI" id="CHEBI:58210"/>
    </ligand>
</feature>
<feature type="binding site" evidence="1">
    <location>
        <begin position="248"/>
        <end position="249"/>
    </location>
    <ligand>
        <name>FMN</name>
        <dbReference type="ChEBI" id="CHEBI:58210"/>
    </ligand>
</feature>
<feature type="site" description="Interacts with tRNA" evidence="1">
    <location>
        <position position="111"/>
    </location>
</feature>
<feature type="site" description="Interacts with tRNA; defines subfamily-specific binding signature" evidence="1">
    <location>
        <position position="198"/>
    </location>
</feature>
<feature type="site" description="Interacts with tRNA" evidence="1">
    <location>
        <position position="201"/>
    </location>
</feature>
<feature type="site" description="Interacts with tRNA; defines subfamily-specific binding signature" evidence="1">
    <location>
        <position position="314"/>
    </location>
</feature>
<feature type="site" description="Interacts with tRNA; defines subfamily-specific binding signature" evidence="1">
    <location>
        <position position="317"/>
    </location>
</feature>
<feature type="mutagenesis site" description="Loss of enzymatic activity; when associated with Ala-153." evidence="3">
    <original>C</original>
    <variation>A</variation>
    <location>
        <position position="114"/>
    </location>
</feature>
<feature type="mutagenesis site" description="Loss of the ability to bind FMN. Loss of enzymatic activity; when associated with Ala-114." evidence="3">
    <original>K</original>
    <variation>A</variation>
    <location>
        <position position="153"/>
    </location>
</feature>
<sequence length="345" mass="38468">MHGNSEMQKINQTSAMPEKTDVHWSGRFSVAPMLDWTDRHCRYFLRLLSRNTLLYTEMVTTGAIIHGKGDYLAYSEEEHPVALQLGGSDPAALAQCAKLAEARGYDEINLNVGCPSDRVQNGMFGACLMGNAQLVADCVKAMRDVVSIPVTVKTRIGIDDQDSYEFLCDFINTVSGKGECEMFIIHARKAWLSGLSPKENREIPPLDYPRVYQLKRDFPHLTMSINGGIKSLEEAKAHLQHMDGVMVGREAYQNPGILAAVDREIFGSSDTDADPVAVVRAMYPYIERELSQGTYLGHITRHMLGLFQGIPGARQWRRYLSENAHKAGADINVLEHALKLVADKR</sequence>
<organism>
    <name type="scientific">Escherichia coli (strain K12)</name>
    <dbReference type="NCBI Taxonomy" id="83333"/>
    <lineage>
        <taxon>Bacteria</taxon>
        <taxon>Pseudomonadati</taxon>
        <taxon>Pseudomonadota</taxon>
        <taxon>Gammaproteobacteria</taxon>
        <taxon>Enterobacterales</taxon>
        <taxon>Enterobacteriaceae</taxon>
        <taxon>Escherichia</taxon>
    </lineage>
</organism>
<keyword id="KW-0903">Direct protein sequencing</keyword>
<keyword id="KW-0285">Flavoprotein</keyword>
<keyword id="KW-0288">FMN</keyword>
<keyword id="KW-0521">NADP</keyword>
<keyword id="KW-0560">Oxidoreductase</keyword>
<keyword id="KW-1185">Reference proteome</keyword>
<keyword id="KW-0694">RNA-binding</keyword>
<keyword id="KW-0819">tRNA processing</keyword>
<keyword id="KW-0820">tRNA-binding</keyword>
<evidence type="ECO:0000255" key="1">
    <source>
        <dbReference type="HAMAP-Rule" id="MF_02041"/>
    </source>
</evidence>
<evidence type="ECO:0000269" key="2">
    <source>
    </source>
</evidence>
<evidence type="ECO:0000269" key="3">
    <source>
    </source>
</evidence>
<evidence type="ECO:0000303" key="4">
    <source>
    </source>
</evidence>
<evidence type="ECO:0000303" key="5">
    <source>
    </source>
</evidence>
<evidence type="ECO:0000305" key="6"/>
<evidence type="ECO:0000305" key="7">
    <source>
    </source>
</evidence>
<evidence type="ECO:0000305" key="8">
    <source>
    </source>
</evidence>
<evidence type="ECO:0000305" key="9">
    <source>
    </source>
</evidence>
<comment type="function">
    <text evidence="1 2 3 9">Catalyzes the synthesis of 5,6-dihydrouridine (D), a modified base found in the D-loop of most tRNAs, via the reduction of the C5-C6 double bond in target uridines. Specifically modifies U20 and U20a in tRNAs.</text>
</comment>
<comment type="catalytic activity">
    <reaction evidence="1 7 8">
        <text>5,6-dihydrouridine(20) in tRNA + NADP(+) = uridine(20) in tRNA + NADPH + H(+)</text>
        <dbReference type="Rhea" id="RHEA:53336"/>
        <dbReference type="Rhea" id="RHEA-COMP:13533"/>
        <dbReference type="Rhea" id="RHEA-COMP:13534"/>
        <dbReference type="ChEBI" id="CHEBI:15378"/>
        <dbReference type="ChEBI" id="CHEBI:57783"/>
        <dbReference type="ChEBI" id="CHEBI:58349"/>
        <dbReference type="ChEBI" id="CHEBI:65315"/>
        <dbReference type="ChEBI" id="CHEBI:74443"/>
        <dbReference type="EC" id="1.3.1.91"/>
    </reaction>
</comment>
<comment type="catalytic activity">
    <reaction evidence="1 7 8">
        <text>5,6-dihydrouridine(20) in tRNA + NAD(+) = uridine(20) in tRNA + NADH + H(+)</text>
        <dbReference type="Rhea" id="RHEA:53340"/>
        <dbReference type="Rhea" id="RHEA-COMP:13533"/>
        <dbReference type="Rhea" id="RHEA-COMP:13534"/>
        <dbReference type="ChEBI" id="CHEBI:15378"/>
        <dbReference type="ChEBI" id="CHEBI:57540"/>
        <dbReference type="ChEBI" id="CHEBI:57945"/>
        <dbReference type="ChEBI" id="CHEBI:65315"/>
        <dbReference type="ChEBI" id="CHEBI:74443"/>
        <dbReference type="EC" id="1.3.1.91"/>
    </reaction>
</comment>
<comment type="catalytic activity">
    <reaction evidence="1 8">
        <text>5,6-dihydrouridine(20a) in tRNA + NADP(+) = uridine(20a) in tRNA + NADPH + H(+)</text>
        <dbReference type="Rhea" id="RHEA:53344"/>
        <dbReference type="Rhea" id="RHEA-COMP:13535"/>
        <dbReference type="Rhea" id="RHEA-COMP:13536"/>
        <dbReference type="ChEBI" id="CHEBI:15378"/>
        <dbReference type="ChEBI" id="CHEBI:57783"/>
        <dbReference type="ChEBI" id="CHEBI:58349"/>
        <dbReference type="ChEBI" id="CHEBI:65315"/>
        <dbReference type="ChEBI" id="CHEBI:74443"/>
    </reaction>
</comment>
<comment type="catalytic activity">
    <reaction evidence="1 8">
        <text>5,6-dihydrouridine(20a) in tRNA + NAD(+) = uridine(20a) in tRNA + NADH + H(+)</text>
        <dbReference type="Rhea" id="RHEA:53348"/>
        <dbReference type="Rhea" id="RHEA-COMP:13535"/>
        <dbReference type="Rhea" id="RHEA-COMP:13536"/>
        <dbReference type="ChEBI" id="CHEBI:15378"/>
        <dbReference type="ChEBI" id="CHEBI:57540"/>
        <dbReference type="ChEBI" id="CHEBI:57945"/>
        <dbReference type="ChEBI" id="CHEBI:65315"/>
        <dbReference type="ChEBI" id="CHEBI:74443"/>
    </reaction>
</comment>
<comment type="cofactor">
    <cofactor evidence="1">
        <name>FMN</name>
        <dbReference type="ChEBI" id="CHEBI:58210"/>
    </cofactor>
</comment>
<comment type="disruption phenotype">
    <text evidence="2 3">A dusA dusB dusC triple mutant exhibits a complete lack of 5,6-dihydrouridine modification in cellular tRNA, whereas each single mutant exhibits a partial reduction, compared to wild type (PubMed:11983710). Cells lacking this gene can introduce D modification at neither 20 or 20a in tRNA (PubMed:22123979).</text>
</comment>
<comment type="miscellaneous">
    <text evidence="2">DusB and DusC together account for about half of the 5,6-dihydrouridine modification observed in wild-type cellular tRNA, and DusA accounts for the other half. These three enzymes seem to act site-specifically on the tRNA D-loop and contain nonredundant catalytic functions in vivo.</text>
</comment>
<comment type="similarity">
    <text evidence="1">Belongs to the Dus family. DusA subfamily.</text>
</comment>
<comment type="caution">
    <text evidence="6">The U21 position mentioned in PubMed:11983710 corresponds in fact to U20 with the conventional numbering.</text>
</comment>
<proteinExistence type="evidence at protein level"/>